<gene>
    <name evidence="1" type="primary">rpsD</name>
    <name type="ordered locus">Shal_4111</name>
</gene>
<accession>B0TLY9</accession>
<name>RS4_SHEHH</name>
<feature type="chain" id="PRO_1000085991" description="Small ribosomal subunit protein uS4">
    <location>
        <begin position="1"/>
        <end position="206"/>
    </location>
</feature>
<feature type="domain" description="S4 RNA-binding" evidence="1">
    <location>
        <begin position="96"/>
        <end position="156"/>
    </location>
</feature>
<reference key="1">
    <citation type="submission" date="2008-01" db="EMBL/GenBank/DDBJ databases">
        <title>Complete sequence of Shewanella halifaxensis HAW-EB4.</title>
        <authorList>
            <consortium name="US DOE Joint Genome Institute"/>
            <person name="Copeland A."/>
            <person name="Lucas S."/>
            <person name="Lapidus A."/>
            <person name="Glavina del Rio T."/>
            <person name="Dalin E."/>
            <person name="Tice H."/>
            <person name="Bruce D."/>
            <person name="Goodwin L."/>
            <person name="Pitluck S."/>
            <person name="Sims D."/>
            <person name="Brettin T."/>
            <person name="Detter J.C."/>
            <person name="Han C."/>
            <person name="Kuske C.R."/>
            <person name="Schmutz J."/>
            <person name="Larimer F."/>
            <person name="Land M."/>
            <person name="Hauser L."/>
            <person name="Kyrpides N."/>
            <person name="Kim E."/>
            <person name="Zhao J.-S."/>
            <person name="Richardson P."/>
        </authorList>
    </citation>
    <scope>NUCLEOTIDE SEQUENCE [LARGE SCALE GENOMIC DNA]</scope>
    <source>
        <strain>HAW-EB4</strain>
    </source>
</reference>
<protein>
    <recommendedName>
        <fullName evidence="1">Small ribosomal subunit protein uS4</fullName>
    </recommendedName>
    <alternativeName>
        <fullName evidence="2">30S ribosomal protein S4</fullName>
    </alternativeName>
</protein>
<sequence length="206" mass="23391">MARYLGPKLKLSRREGTDLFLKSGVRAIDSKCKLETAPGQHGARKTRLSEYGVQLREKQKVRRIYGVLEKQFRNYYKDAARTKGNTGENLLTLLETRLDNVVYRMGFGATRAESRQLVSHKSIMVNGSVVNIPSFKVSANDVVSVREKSRTQARIKAALEVSAQREKPTWVEVDNTKMEGAFKRIPERSDLSAEINEQLIVELYSK</sequence>
<evidence type="ECO:0000255" key="1">
    <source>
        <dbReference type="HAMAP-Rule" id="MF_01306"/>
    </source>
</evidence>
<evidence type="ECO:0000305" key="2"/>
<dbReference type="EMBL" id="CP000931">
    <property type="protein sequence ID" value="ABZ78651.1"/>
    <property type="molecule type" value="Genomic_DNA"/>
</dbReference>
<dbReference type="RefSeq" id="WP_012153477.1">
    <property type="nucleotide sequence ID" value="NC_010334.1"/>
</dbReference>
<dbReference type="SMR" id="B0TLY9"/>
<dbReference type="STRING" id="458817.Shal_4111"/>
<dbReference type="KEGG" id="shl:Shal_4111"/>
<dbReference type="eggNOG" id="COG0522">
    <property type="taxonomic scope" value="Bacteria"/>
</dbReference>
<dbReference type="HOGENOM" id="CLU_092403_0_2_6"/>
<dbReference type="OrthoDB" id="9803672at2"/>
<dbReference type="Proteomes" id="UP000001317">
    <property type="component" value="Chromosome"/>
</dbReference>
<dbReference type="GO" id="GO:0015935">
    <property type="term" value="C:small ribosomal subunit"/>
    <property type="evidence" value="ECO:0007669"/>
    <property type="project" value="InterPro"/>
</dbReference>
<dbReference type="GO" id="GO:0019843">
    <property type="term" value="F:rRNA binding"/>
    <property type="evidence" value="ECO:0007669"/>
    <property type="project" value="UniProtKB-UniRule"/>
</dbReference>
<dbReference type="GO" id="GO:0003735">
    <property type="term" value="F:structural constituent of ribosome"/>
    <property type="evidence" value="ECO:0007669"/>
    <property type="project" value="InterPro"/>
</dbReference>
<dbReference type="GO" id="GO:0042274">
    <property type="term" value="P:ribosomal small subunit biogenesis"/>
    <property type="evidence" value="ECO:0007669"/>
    <property type="project" value="TreeGrafter"/>
</dbReference>
<dbReference type="GO" id="GO:0006412">
    <property type="term" value="P:translation"/>
    <property type="evidence" value="ECO:0007669"/>
    <property type="project" value="UniProtKB-UniRule"/>
</dbReference>
<dbReference type="CDD" id="cd00165">
    <property type="entry name" value="S4"/>
    <property type="match status" value="1"/>
</dbReference>
<dbReference type="FunFam" id="1.10.1050.10:FF:000001">
    <property type="entry name" value="30S ribosomal protein S4"/>
    <property type="match status" value="1"/>
</dbReference>
<dbReference type="FunFam" id="3.10.290.10:FF:000001">
    <property type="entry name" value="30S ribosomal protein S4"/>
    <property type="match status" value="1"/>
</dbReference>
<dbReference type="Gene3D" id="1.10.1050.10">
    <property type="entry name" value="Ribosomal Protein S4 Delta 41, Chain A, domain 1"/>
    <property type="match status" value="1"/>
</dbReference>
<dbReference type="Gene3D" id="3.10.290.10">
    <property type="entry name" value="RNA-binding S4 domain"/>
    <property type="match status" value="1"/>
</dbReference>
<dbReference type="HAMAP" id="MF_01306_B">
    <property type="entry name" value="Ribosomal_uS4_B"/>
    <property type="match status" value="1"/>
</dbReference>
<dbReference type="InterPro" id="IPR022801">
    <property type="entry name" value="Ribosomal_uS4"/>
</dbReference>
<dbReference type="InterPro" id="IPR005709">
    <property type="entry name" value="Ribosomal_uS4_bac-type"/>
</dbReference>
<dbReference type="InterPro" id="IPR018079">
    <property type="entry name" value="Ribosomal_uS4_CS"/>
</dbReference>
<dbReference type="InterPro" id="IPR001912">
    <property type="entry name" value="Ribosomal_uS4_N"/>
</dbReference>
<dbReference type="InterPro" id="IPR002942">
    <property type="entry name" value="S4_RNA-bd"/>
</dbReference>
<dbReference type="InterPro" id="IPR036986">
    <property type="entry name" value="S4_RNA-bd_sf"/>
</dbReference>
<dbReference type="NCBIfam" id="NF003717">
    <property type="entry name" value="PRK05327.1"/>
    <property type="match status" value="1"/>
</dbReference>
<dbReference type="NCBIfam" id="TIGR01017">
    <property type="entry name" value="rpsD_bact"/>
    <property type="match status" value="1"/>
</dbReference>
<dbReference type="PANTHER" id="PTHR11831">
    <property type="entry name" value="30S 40S RIBOSOMAL PROTEIN"/>
    <property type="match status" value="1"/>
</dbReference>
<dbReference type="PANTHER" id="PTHR11831:SF4">
    <property type="entry name" value="SMALL RIBOSOMAL SUBUNIT PROTEIN US4M"/>
    <property type="match status" value="1"/>
</dbReference>
<dbReference type="Pfam" id="PF00163">
    <property type="entry name" value="Ribosomal_S4"/>
    <property type="match status" value="1"/>
</dbReference>
<dbReference type="Pfam" id="PF01479">
    <property type="entry name" value="S4"/>
    <property type="match status" value="1"/>
</dbReference>
<dbReference type="SMART" id="SM01390">
    <property type="entry name" value="Ribosomal_S4"/>
    <property type="match status" value="1"/>
</dbReference>
<dbReference type="SMART" id="SM00363">
    <property type="entry name" value="S4"/>
    <property type="match status" value="1"/>
</dbReference>
<dbReference type="SUPFAM" id="SSF55174">
    <property type="entry name" value="Alpha-L RNA-binding motif"/>
    <property type="match status" value="1"/>
</dbReference>
<dbReference type="PROSITE" id="PS00632">
    <property type="entry name" value="RIBOSOMAL_S4"/>
    <property type="match status" value="1"/>
</dbReference>
<dbReference type="PROSITE" id="PS50889">
    <property type="entry name" value="S4"/>
    <property type="match status" value="1"/>
</dbReference>
<organism>
    <name type="scientific">Shewanella halifaxensis (strain HAW-EB4)</name>
    <dbReference type="NCBI Taxonomy" id="458817"/>
    <lineage>
        <taxon>Bacteria</taxon>
        <taxon>Pseudomonadati</taxon>
        <taxon>Pseudomonadota</taxon>
        <taxon>Gammaproteobacteria</taxon>
        <taxon>Alteromonadales</taxon>
        <taxon>Shewanellaceae</taxon>
        <taxon>Shewanella</taxon>
    </lineage>
</organism>
<comment type="function">
    <text evidence="1">One of the primary rRNA binding proteins, it binds directly to 16S rRNA where it nucleates assembly of the body of the 30S subunit.</text>
</comment>
<comment type="function">
    <text evidence="1">With S5 and S12 plays an important role in translational accuracy.</text>
</comment>
<comment type="subunit">
    <text evidence="1">Part of the 30S ribosomal subunit. Contacts protein S5. The interaction surface between S4 and S5 is involved in control of translational fidelity.</text>
</comment>
<comment type="similarity">
    <text evidence="1">Belongs to the universal ribosomal protein uS4 family.</text>
</comment>
<keyword id="KW-0687">Ribonucleoprotein</keyword>
<keyword id="KW-0689">Ribosomal protein</keyword>
<keyword id="KW-0694">RNA-binding</keyword>
<keyword id="KW-0699">rRNA-binding</keyword>
<proteinExistence type="inferred from homology"/>